<protein>
    <recommendedName>
        <fullName evidence="1">Protein nucleotidyltransferase YdiU</fullName>
        <ecNumber evidence="1">2.7.7.-</ecNumber>
    </recommendedName>
    <alternativeName>
        <fullName evidence="1">Protein adenylyltransferase YdiU</fullName>
        <ecNumber evidence="1">2.7.7.108</ecNumber>
    </alternativeName>
    <alternativeName>
        <fullName evidence="1">Protein uridylyltransferase YdiU</fullName>
        <ecNumber evidence="1">2.7.7.-</ecNumber>
    </alternativeName>
</protein>
<accession>A4JEZ0</accession>
<reference key="1">
    <citation type="submission" date="2007-03" db="EMBL/GenBank/DDBJ databases">
        <title>Complete sequence of chromosome 1 of Burkholderia vietnamiensis G4.</title>
        <authorList>
            <consortium name="US DOE Joint Genome Institute"/>
            <person name="Copeland A."/>
            <person name="Lucas S."/>
            <person name="Lapidus A."/>
            <person name="Barry K."/>
            <person name="Detter J.C."/>
            <person name="Glavina del Rio T."/>
            <person name="Hammon N."/>
            <person name="Israni S."/>
            <person name="Dalin E."/>
            <person name="Tice H."/>
            <person name="Pitluck S."/>
            <person name="Chain P."/>
            <person name="Malfatti S."/>
            <person name="Shin M."/>
            <person name="Vergez L."/>
            <person name="Schmutz J."/>
            <person name="Larimer F."/>
            <person name="Land M."/>
            <person name="Hauser L."/>
            <person name="Kyrpides N."/>
            <person name="Tiedje J."/>
            <person name="Richardson P."/>
        </authorList>
    </citation>
    <scope>NUCLEOTIDE SEQUENCE [LARGE SCALE GENOMIC DNA]</scope>
    <source>
        <strain>G4 / LMG 22486</strain>
    </source>
</reference>
<comment type="function">
    <text evidence="1">Nucleotidyltransferase involved in the post-translational modification of proteins. It can catalyze the addition of adenosine monophosphate (AMP) or uridine monophosphate (UMP) to a protein, resulting in modifications known as AMPylation and UMPylation.</text>
</comment>
<comment type="catalytic activity">
    <reaction evidence="1">
        <text>L-seryl-[protein] + ATP = 3-O-(5'-adenylyl)-L-seryl-[protein] + diphosphate</text>
        <dbReference type="Rhea" id="RHEA:58120"/>
        <dbReference type="Rhea" id="RHEA-COMP:9863"/>
        <dbReference type="Rhea" id="RHEA-COMP:15073"/>
        <dbReference type="ChEBI" id="CHEBI:29999"/>
        <dbReference type="ChEBI" id="CHEBI:30616"/>
        <dbReference type="ChEBI" id="CHEBI:33019"/>
        <dbReference type="ChEBI" id="CHEBI:142516"/>
        <dbReference type="EC" id="2.7.7.108"/>
    </reaction>
</comment>
<comment type="catalytic activity">
    <reaction evidence="1">
        <text>L-threonyl-[protein] + ATP = 3-O-(5'-adenylyl)-L-threonyl-[protein] + diphosphate</text>
        <dbReference type="Rhea" id="RHEA:54292"/>
        <dbReference type="Rhea" id="RHEA-COMP:11060"/>
        <dbReference type="Rhea" id="RHEA-COMP:13847"/>
        <dbReference type="ChEBI" id="CHEBI:30013"/>
        <dbReference type="ChEBI" id="CHEBI:30616"/>
        <dbReference type="ChEBI" id="CHEBI:33019"/>
        <dbReference type="ChEBI" id="CHEBI:138113"/>
        <dbReference type="EC" id="2.7.7.108"/>
    </reaction>
</comment>
<comment type="catalytic activity">
    <reaction evidence="1">
        <text>L-tyrosyl-[protein] + ATP = O-(5'-adenylyl)-L-tyrosyl-[protein] + diphosphate</text>
        <dbReference type="Rhea" id="RHEA:54288"/>
        <dbReference type="Rhea" id="RHEA-COMP:10136"/>
        <dbReference type="Rhea" id="RHEA-COMP:13846"/>
        <dbReference type="ChEBI" id="CHEBI:30616"/>
        <dbReference type="ChEBI" id="CHEBI:33019"/>
        <dbReference type="ChEBI" id="CHEBI:46858"/>
        <dbReference type="ChEBI" id="CHEBI:83624"/>
        <dbReference type="EC" id="2.7.7.108"/>
    </reaction>
</comment>
<comment type="catalytic activity">
    <reaction evidence="1">
        <text>L-histidyl-[protein] + UTP = N(tele)-(5'-uridylyl)-L-histidyl-[protein] + diphosphate</text>
        <dbReference type="Rhea" id="RHEA:83891"/>
        <dbReference type="Rhea" id="RHEA-COMP:9745"/>
        <dbReference type="Rhea" id="RHEA-COMP:20239"/>
        <dbReference type="ChEBI" id="CHEBI:29979"/>
        <dbReference type="ChEBI" id="CHEBI:33019"/>
        <dbReference type="ChEBI" id="CHEBI:46398"/>
        <dbReference type="ChEBI" id="CHEBI:233474"/>
    </reaction>
</comment>
<comment type="catalytic activity">
    <reaction evidence="1">
        <text>L-seryl-[protein] + UTP = O-(5'-uridylyl)-L-seryl-[protein] + diphosphate</text>
        <dbReference type="Rhea" id="RHEA:64604"/>
        <dbReference type="Rhea" id="RHEA-COMP:9863"/>
        <dbReference type="Rhea" id="RHEA-COMP:16635"/>
        <dbReference type="ChEBI" id="CHEBI:29999"/>
        <dbReference type="ChEBI" id="CHEBI:33019"/>
        <dbReference type="ChEBI" id="CHEBI:46398"/>
        <dbReference type="ChEBI" id="CHEBI:156051"/>
    </reaction>
</comment>
<comment type="catalytic activity">
    <reaction evidence="1">
        <text>L-tyrosyl-[protein] + UTP = O-(5'-uridylyl)-L-tyrosyl-[protein] + diphosphate</text>
        <dbReference type="Rhea" id="RHEA:83887"/>
        <dbReference type="Rhea" id="RHEA-COMP:10136"/>
        <dbReference type="Rhea" id="RHEA-COMP:20238"/>
        <dbReference type="ChEBI" id="CHEBI:33019"/>
        <dbReference type="ChEBI" id="CHEBI:46398"/>
        <dbReference type="ChEBI" id="CHEBI:46858"/>
        <dbReference type="ChEBI" id="CHEBI:90602"/>
    </reaction>
</comment>
<comment type="cofactor">
    <cofactor evidence="1">
        <name>Mg(2+)</name>
        <dbReference type="ChEBI" id="CHEBI:18420"/>
    </cofactor>
    <cofactor evidence="1">
        <name>Mn(2+)</name>
        <dbReference type="ChEBI" id="CHEBI:29035"/>
    </cofactor>
</comment>
<comment type="similarity">
    <text evidence="1">Belongs to the SELO family.</text>
</comment>
<feature type="chain" id="PRO_1000045245" description="Protein nucleotidyltransferase YdiU">
    <location>
        <begin position="1"/>
        <end position="522"/>
    </location>
</feature>
<feature type="active site" description="Proton acceptor" evidence="1">
    <location>
        <position position="271"/>
    </location>
</feature>
<feature type="binding site" evidence="1">
    <location>
        <position position="109"/>
    </location>
    <ligand>
        <name>ATP</name>
        <dbReference type="ChEBI" id="CHEBI:30616"/>
    </ligand>
</feature>
<feature type="binding site" evidence="1">
    <location>
        <position position="111"/>
    </location>
    <ligand>
        <name>ATP</name>
        <dbReference type="ChEBI" id="CHEBI:30616"/>
    </ligand>
</feature>
<feature type="binding site" evidence="1">
    <location>
        <position position="112"/>
    </location>
    <ligand>
        <name>ATP</name>
        <dbReference type="ChEBI" id="CHEBI:30616"/>
    </ligand>
</feature>
<feature type="binding site" evidence="1">
    <location>
        <position position="132"/>
    </location>
    <ligand>
        <name>ATP</name>
        <dbReference type="ChEBI" id="CHEBI:30616"/>
    </ligand>
</feature>
<feature type="binding site" evidence="1">
    <location>
        <position position="144"/>
    </location>
    <ligand>
        <name>ATP</name>
        <dbReference type="ChEBI" id="CHEBI:30616"/>
    </ligand>
</feature>
<feature type="binding site" evidence="1">
    <location>
        <position position="145"/>
    </location>
    <ligand>
        <name>ATP</name>
        <dbReference type="ChEBI" id="CHEBI:30616"/>
    </ligand>
</feature>
<feature type="binding site" evidence="1">
    <location>
        <position position="195"/>
    </location>
    <ligand>
        <name>ATP</name>
        <dbReference type="ChEBI" id="CHEBI:30616"/>
    </ligand>
</feature>
<feature type="binding site" evidence="1">
    <location>
        <position position="202"/>
    </location>
    <ligand>
        <name>ATP</name>
        <dbReference type="ChEBI" id="CHEBI:30616"/>
    </ligand>
</feature>
<feature type="binding site" evidence="1">
    <location>
        <position position="272"/>
    </location>
    <ligand>
        <name>Mg(2+)</name>
        <dbReference type="ChEBI" id="CHEBI:18420"/>
    </ligand>
</feature>
<feature type="binding site" evidence="1">
    <location>
        <position position="281"/>
    </location>
    <ligand>
        <name>ATP</name>
        <dbReference type="ChEBI" id="CHEBI:30616"/>
    </ligand>
</feature>
<feature type="binding site" evidence="1">
    <location>
        <position position="281"/>
    </location>
    <ligand>
        <name>Mg(2+)</name>
        <dbReference type="ChEBI" id="CHEBI:18420"/>
    </ligand>
</feature>
<sequence>MSFSRSAADPADTLPDLAATLAAPGDDAFVALGDAFHTRLPAAPLPAPYVVGFSAEVAQLLGLPPSLAAHAQFAELFAGNPTRDWPAHALPYASVYSGHQFGVWAGQLGDGRALTIGELPGSDGRRYELQLKGGGRTPYSRMGDGRAVLRSSIREYLCSEAMHHLGIPTTRALTVIGSDQPVVREEIETSAVVTRVSESFVRFGHFEHFFSNDRPDLLRRLADHVIERFYPACREADDPYLALLEAAMLRTADMVAQWQAVGFCHGVMNTDNMSILGVTIDYGPFGFVDAFDANHICNHSDTSGRYAYRMQPRIAHWNCYCLAQALLPLIGLQHGIGDDDARAERAVDDAQAVLAKFPERFGPALERAMRAKLGLELEREHDAELANQLLETMHASHADFTLTFRRLAQLSKHDASRDAPVRDLFIDRAAFDAWANLYRARLSEETRDDAARAAAMNRVNPKYVLRNHLAEVAIRRAKDKDFSEVERLAQILRRPFDEQPEHEPYAALPPDWAGSLEVSCSS</sequence>
<proteinExistence type="inferred from homology"/>
<evidence type="ECO:0000255" key="1">
    <source>
        <dbReference type="HAMAP-Rule" id="MF_00692"/>
    </source>
</evidence>
<gene>
    <name evidence="1" type="primary">ydiU</name>
    <name evidence="1" type="synonym">selO</name>
    <name type="ordered locus">Bcep1808_1840</name>
</gene>
<keyword id="KW-0067">ATP-binding</keyword>
<keyword id="KW-0460">Magnesium</keyword>
<keyword id="KW-0464">Manganese</keyword>
<keyword id="KW-0479">Metal-binding</keyword>
<keyword id="KW-0547">Nucleotide-binding</keyword>
<keyword id="KW-0548">Nucleotidyltransferase</keyword>
<keyword id="KW-0808">Transferase</keyword>
<organism>
    <name type="scientific">Burkholderia vietnamiensis (strain G4 / LMG 22486)</name>
    <name type="common">Burkholderia cepacia (strain R1808)</name>
    <dbReference type="NCBI Taxonomy" id="269482"/>
    <lineage>
        <taxon>Bacteria</taxon>
        <taxon>Pseudomonadati</taxon>
        <taxon>Pseudomonadota</taxon>
        <taxon>Betaproteobacteria</taxon>
        <taxon>Burkholderiales</taxon>
        <taxon>Burkholderiaceae</taxon>
        <taxon>Burkholderia</taxon>
        <taxon>Burkholderia cepacia complex</taxon>
    </lineage>
</organism>
<name>SELO_BURVG</name>
<dbReference type="EC" id="2.7.7.-" evidence="1"/>
<dbReference type="EC" id="2.7.7.108" evidence="1"/>
<dbReference type="EMBL" id="CP000614">
    <property type="protein sequence ID" value="ABO54843.1"/>
    <property type="molecule type" value="Genomic_DNA"/>
</dbReference>
<dbReference type="SMR" id="A4JEZ0"/>
<dbReference type="KEGG" id="bvi:Bcep1808_1840"/>
<dbReference type="eggNOG" id="COG0397">
    <property type="taxonomic scope" value="Bacteria"/>
</dbReference>
<dbReference type="HOGENOM" id="CLU_010245_4_0_4"/>
<dbReference type="Proteomes" id="UP000002287">
    <property type="component" value="Chromosome 1"/>
</dbReference>
<dbReference type="GO" id="GO:0070733">
    <property type="term" value="F:AMPylase activity"/>
    <property type="evidence" value="ECO:0007669"/>
    <property type="project" value="RHEA"/>
</dbReference>
<dbReference type="GO" id="GO:0005524">
    <property type="term" value="F:ATP binding"/>
    <property type="evidence" value="ECO:0007669"/>
    <property type="project" value="UniProtKB-UniRule"/>
</dbReference>
<dbReference type="GO" id="GO:0000287">
    <property type="term" value="F:magnesium ion binding"/>
    <property type="evidence" value="ECO:0007669"/>
    <property type="project" value="UniProtKB-UniRule"/>
</dbReference>
<dbReference type="HAMAP" id="MF_00692">
    <property type="entry name" value="YdiU_SelO"/>
    <property type="match status" value="1"/>
</dbReference>
<dbReference type="InterPro" id="IPR003846">
    <property type="entry name" value="SelO"/>
</dbReference>
<dbReference type="NCBIfam" id="NF000658">
    <property type="entry name" value="PRK00029.1"/>
    <property type="match status" value="1"/>
</dbReference>
<dbReference type="PANTHER" id="PTHR32057">
    <property type="entry name" value="PROTEIN ADENYLYLTRANSFERASE SELO, MITOCHONDRIAL"/>
    <property type="match status" value="1"/>
</dbReference>
<dbReference type="PANTHER" id="PTHR32057:SF14">
    <property type="entry name" value="PROTEIN ADENYLYLTRANSFERASE SELO, MITOCHONDRIAL"/>
    <property type="match status" value="1"/>
</dbReference>
<dbReference type="Pfam" id="PF02696">
    <property type="entry name" value="SelO"/>
    <property type="match status" value="1"/>
</dbReference>